<proteinExistence type="inferred from homology"/>
<gene>
    <name evidence="1" type="primary">dtd</name>
    <name type="ordered locus">SPT_1584</name>
</gene>
<sequence length="147" mass="16242">MKIIIQRVKKAQVSIEGQIQGKINQGLLLLVGVGPEDQEEDLDYAVRKLVNMRIFSDVEGKMNLSVKDIEGEILSISQFTLFADTKKGNRPAFTGAAKPDMASDFYDAFNQKLAQEVPVQTGIFGADMQVELVNNGPVTIILDTKKR</sequence>
<protein>
    <recommendedName>
        <fullName evidence="1">D-aminoacyl-tRNA deacylase</fullName>
        <shortName evidence="1">DTD</shortName>
        <ecNumber evidence="1">3.1.1.96</ecNumber>
    </recommendedName>
    <alternativeName>
        <fullName evidence="1">Gly-tRNA(Ala) deacylase</fullName>
    </alternativeName>
</protein>
<accession>C1CSR0</accession>
<dbReference type="EC" id="3.1.1.96" evidence="1"/>
<dbReference type="EMBL" id="CP000921">
    <property type="protein sequence ID" value="ACO24017.1"/>
    <property type="molecule type" value="Genomic_DNA"/>
</dbReference>
<dbReference type="RefSeq" id="WP_000691408.1">
    <property type="nucleotide sequence ID" value="NC_012469.1"/>
</dbReference>
<dbReference type="SMR" id="C1CSR0"/>
<dbReference type="KEGG" id="snt:SPT_1584"/>
<dbReference type="HOGENOM" id="CLU_076901_1_0_9"/>
<dbReference type="GO" id="GO:0005737">
    <property type="term" value="C:cytoplasm"/>
    <property type="evidence" value="ECO:0007669"/>
    <property type="project" value="UniProtKB-SubCell"/>
</dbReference>
<dbReference type="GO" id="GO:0051500">
    <property type="term" value="F:D-tyrosyl-tRNA(Tyr) deacylase activity"/>
    <property type="evidence" value="ECO:0007669"/>
    <property type="project" value="TreeGrafter"/>
</dbReference>
<dbReference type="GO" id="GO:0106026">
    <property type="term" value="F:Gly-tRNA(Ala) deacylase activity"/>
    <property type="evidence" value="ECO:0007669"/>
    <property type="project" value="UniProtKB-UniRule"/>
</dbReference>
<dbReference type="GO" id="GO:0043908">
    <property type="term" value="F:Ser(Gly)-tRNA(Ala) hydrolase activity"/>
    <property type="evidence" value="ECO:0007669"/>
    <property type="project" value="UniProtKB-UniRule"/>
</dbReference>
<dbReference type="GO" id="GO:0000049">
    <property type="term" value="F:tRNA binding"/>
    <property type="evidence" value="ECO:0007669"/>
    <property type="project" value="UniProtKB-UniRule"/>
</dbReference>
<dbReference type="GO" id="GO:0019478">
    <property type="term" value="P:D-amino acid catabolic process"/>
    <property type="evidence" value="ECO:0007669"/>
    <property type="project" value="UniProtKB-UniRule"/>
</dbReference>
<dbReference type="CDD" id="cd00563">
    <property type="entry name" value="Dtyr_deacylase"/>
    <property type="match status" value="1"/>
</dbReference>
<dbReference type="FunFam" id="3.50.80.10:FF:000001">
    <property type="entry name" value="D-aminoacyl-tRNA deacylase"/>
    <property type="match status" value="1"/>
</dbReference>
<dbReference type="Gene3D" id="3.50.80.10">
    <property type="entry name" value="D-tyrosyl-tRNA(Tyr) deacylase"/>
    <property type="match status" value="1"/>
</dbReference>
<dbReference type="HAMAP" id="MF_00518">
    <property type="entry name" value="Deacylase_Dtd"/>
    <property type="match status" value="1"/>
</dbReference>
<dbReference type="InterPro" id="IPR003732">
    <property type="entry name" value="Daa-tRNA_deacyls_DTD"/>
</dbReference>
<dbReference type="InterPro" id="IPR023509">
    <property type="entry name" value="DTD-like_sf"/>
</dbReference>
<dbReference type="NCBIfam" id="TIGR00256">
    <property type="entry name" value="D-aminoacyl-tRNA deacylase"/>
    <property type="match status" value="1"/>
</dbReference>
<dbReference type="PANTHER" id="PTHR10472:SF5">
    <property type="entry name" value="D-AMINOACYL-TRNA DEACYLASE 1"/>
    <property type="match status" value="1"/>
</dbReference>
<dbReference type="PANTHER" id="PTHR10472">
    <property type="entry name" value="D-TYROSYL-TRNA TYR DEACYLASE"/>
    <property type="match status" value="1"/>
</dbReference>
<dbReference type="Pfam" id="PF02580">
    <property type="entry name" value="Tyr_Deacylase"/>
    <property type="match status" value="1"/>
</dbReference>
<dbReference type="SUPFAM" id="SSF69500">
    <property type="entry name" value="DTD-like"/>
    <property type="match status" value="1"/>
</dbReference>
<name>DTD_STRZT</name>
<comment type="function">
    <text evidence="1">An aminoacyl-tRNA editing enzyme that deacylates mischarged D-aminoacyl-tRNAs. Also deacylates mischarged glycyl-tRNA(Ala), protecting cells against glycine mischarging by AlaRS. Acts via tRNA-based rather than protein-based catalysis; rejects L-amino acids rather than detecting D-amino acids in the active site. By recycling D-aminoacyl-tRNA to D-amino acids and free tRNA molecules, this enzyme counteracts the toxicity associated with the formation of D-aminoacyl-tRNA entities in vivo and helps enforce protein L-homochirality.</text>
</comment>
<comment type="catalytic activity">
    <reaction evidence="1">
        <text>glycyl-tRNA(Ala) + H2O = tRNA(Ala) + glycine + H(+)</text>
        <dbReference type="Rhea" id="RHEA:53744"/>
        <dbReference type="Rhea" id="RHEA-COMP:9657"/>
        <dbReference type="Rhea" id="RHEA-COMP:13640"/>
        <dbReference type="ChEBI" id="CHEBI:15377"/>
        <dbReference type="ChEBI" id="CHEBI:15378"/>
        <dbReference type="ChEBI" id="CHEBI:57305"/>
        <dbReference type="ChEBI" id="CHEBI:78442"/>
        <dbReference type="ChEBI" id="CHEBI:78522"/>
        <dbReference type="EC" id="3.1.1.96"/>
    </reaction>
</comment>
<comment type="catalytic activity">
    <reaction evidence="1">
        <text>a D-aminoacyl-tRNA + H2O = a tRNA + a D-alpha-amino acid + H(+)</text>
        <dbReference type="Rhea" id="RHEA:13953"/>
        <dbReference type="Rhea" id="RHEA-COMP:10123"/>
        <dbReference type="Rhea" id="RHEA-COMP:10124"/>
        <dbReference type="ChEBI" id="CHEBI:15377"/>
        <dbReference type="ChEBI" id="CHEBI:15378"/>
        <dbReference type="ChEBI" id="CHEBI:59871"/>
        <dbReference type="ChEBI" id="CHEBI:78442"/>
        <dbReference type="ChEBI" id="CHEBI:79333"/>
        <dbReference type="EC" id="3.1.1.96"/>
    </reaction>
</comment>
<comment type="subunit">
    <text evidence="1">Homodimer.</text>
</comment>
<comment type="subcellular location">
    <subcellularLocation>
        <location evidence="1">Cytoplasm</location>
    </subcellularLocation>
</comment>
<comment type="domain">
    <text evidence="1">A Gly-cisPro motif from one monomer fits into the active site of the other monomer to allow specific chiral rejection of L-amino acids.</text>
</comment>
<comment type="similarity">
    <text evidence="1">Belongs to the DTD family.</text>
</comment>
<evidence type="ECO:0000255" key="1">
    <source>
        <dbReference type="HAMAP-Rule" id="MF_00518"/>
    </source>
</evidence>
<keyword id="KW-0963">Cytoplasm</keyword>
<keyword id="KW-0378">Hydrolase</keyword>
<keyword id="KW-0694">RNA-binding</keyword>
<keyword id="KW-0820">tRNA-binding</keyword>
<organism>
    <name type="scientific">Streptococcus pneumoniae (strain Taiwan19F-14)</name>
    <dbReference type="NCBI Taxonomy" id="487213"/>
    <lineage>
        <taxon>Bacteria</taxon>
        <taxon>Bacillati</taxon>
        <taxon>Bacillota</taxon>
        <taxon>Bacilli</taxon>
        <taxon>Lactobacillales</taxon>
        <taxon>Streptococcaceae</taxon>
        <taxon>Streptococcus</taxon>
    </lineage>
</organism>
<reference key="1">
    <citation type="journal article" date="2010" name="Genome Biol.">
        <title>Structure and dynamics of the pan-genome of Streptococcus pneumoniae and closely related species.</title>
        <authorList>
            <person name="Donati C."/>
            <person name="Hiller N.L."/>
            <person name="Tettelin H."/>
            <person name="Muzzi A."/>
            <person name="Croucher N.J."/>
            <person name="Angiuoli S.V."/>
            <person name="Oggioni M."/>
            <person name="Dunning Hotopp J.C."/>
            <person name="Hu F.Z."/>
            <person name="Riley D.R."/>
            <person name="Covacci A."/>
            <person name="Mitchell T.J."/>
            <person name="Bentley S.D."/>
            <person name="Kilian M."/>
            <person name="Ehrlich G.D."/>
            <person name="Rappuoli R."/>
            <person name="Moxon E.R."/>
            <person name="Masignani V."/>
        </authorList>
    </citation>
    <scope>NUCLEOTIDE SEQUENCE [LARGE SCALE GENOMIC DNA]</scope>
    <source>
        <strain>Taiwan19F-14</strain>
    </source>
</reference>
<feature type="chain" id="PRO_1000146218" description="D-aminoacyl-tRNA deacylase">
    <location>
        <begin position="1"/>
        <end position="147"/>
    </location>
</feature>
<feature type="short sequence motif" description="Gly-cisPro motif, important for rejection of L-amino acids" evidence="1">
    <location>
        <begin position="136"/>
        <end position="137"/>
    </location>
</feature>